<feature type="chain" id="PRO_0000241485" description="Elongation factor Ts">
    <location>
        <begin position="1"/>
        <end position="216"/>
    </location>
</feature>
<feature type="region of interest" description="Involved in Mg(2+) ion dislocation from EF-Tu" evidence="1">
    <location>
        <begin position="81"/>
        <end position="84"/>
    </location>
</feature>
<dbReference type="EMBL" id="CP000148">
    <property type="protein sequence ID" value="ABB31487.1"/>
    <property type="molecule type" value="Genomic_DNA"/>
</dbReference>
<dbReference type="RefSeq" id="WP_011365792.1">
    <property type="nucleotide sequence ID" value="NC_007517.1"/>
</dbReference>
<dbReference type="SMR" id="Q39W87"/>
<dbReference type="STRING" id="269799.Gmet_1251"/>
<dbReference type="KEGG" id="gme:Gmet_1251"/>
<dbReference type="eggNOG" id="COG0264">
    <property type="taxonomic scope" value="Bacteria"/>
</dbReference>
<dbReference type="HOGENOM" id="CLU_047155_1_1_7"/>
<dbReference type="Proteomes" id="UP000007073">
    <property type="component" value="Chromosome"/>
</dbReference>
<dbReference type="GO" id="GO:0005737">
    <property type="term" value="C:cytoplasm"/>
    <property type="evidence" value="ECO:0007669"/>
    <property type="project" value="UniProtKB-SubCell"/>
</dbReference>
<dbReference type="GO" id="GO:0003746">
    <property type="term" value="F:translation elongation factor activity"/>
    <property type="evidence" value="ECO:0007669"/>
    <property type="project" value="UniProtKB-UniRule"/>
</dbReference>
<dbReference type="CDD" id="cd14275">
    <property type="entry name" value="UBA_EF-Ts"/>
    <property type="match status" value="1"/>
</dbReference>
<dbReference type="FunFam" id="1.10.286.20:FF:000001">
    <property type="entry name" value="Elongation factor Ts"/>
    <property type="match status" value="1"/>
</dbReference>
<dbReference type="FunFam" id="1.10.8.10:FF:000001">
    <property type="entry name" value="Elongation factor Ts"/>
    <property type="match status" value="1"/>
</dbReference>
<dbReference type="Gene3D" id="1.10.286.20">
    <property type="match status" value="1"/>
</dbReference>
<dbReference type="Gene3D" id="1.10.8.10">
    <property type="entry name" value="DNA helicase RuvA subunit, C-terminal domain"/>
    <property type="match status" value="1"/>
</dbReference>
<dbReference type="Gene3D" id="3.30.479.20">
    <property type="entry name" value="Elongation factor Ts, dimerisation domain"/>
    <property type="match status" value="1"/>
</dbReference>
<dbReference type="HAMAP" id="MF_00050">
    <property type="entry name" value="EF_Ts"/>
    <property type="match status" value="1"/>
</dbReference>
<dbReference type="InterPro" id="IPR036402">
    <property type="entry name" value="EF-Ts_dimer_sf"/>
</dbReference>
<dbReference type="InterPro" id="IPR001816">
    <property type="entry name" value="Transl_elong_EFTs/EF1B"/>
</dbReference>
<dbReference type="InterPro" id="IPR014039">
    <property type="entry name" value="Transl_elong_EFTs/EF1B_dimer"/>
</dbReference>
<dbReference type="InterPro" id="IPR018101">
    <property type="entry name" value="Transl_elong_Ts_CS"/>
</dbReference>
<dbReference type="InterPro" id="IPR009060">
    <property type="entry name" value="UBA-like_sf"/>
</dbReference>
<dbReference type="NCBIfam" id="TIGR00116">
    <property type="entry name" value="tsf"/>
    <property type="match status" value="2"/>
</dbReference>
<dbReference type="PANTHER" id="PTHR11741">
    <property type="entry name" value="ELONGATION FACTOR TS"/>
    <property type="match status" value="1"/>
</dbReference>
<dbReference type="PANTHER" id="PTHR11741:SF0">
    <property type="entry name" value="ELONGATION FACTOR TS, MITOCHONDRIAL"/>
    <property type="match status" value="1"/>
</dbReference>
<dbReference type="Pfam" id="PF00889">
    <property type="entry name" value="EF_TS"/>
    <property type="match status" value="2"/>
</dbReference>
<dbReference type="SUPFAM" id="SSF54713">
    <property type="entry name" value="Elongation factor Ts (EF-Ts), dimerisation domain"/>
    <property type="match status" value="1"/>
</dbReference>
<dbReference type="SUPFAM" id="SSF46934">
    <property type="entry name" value="UBA-like"/>
    <property type="match status" value="1"/>
</dbReference>
<dbReference type="PROSITE" id="PS01126">
    <property type="entry name" value="EF_TS_1"/>
    <property type="match status" value="1"/>
</dbReference>
<dbReference type="PROSITE" id="PS01127">
    <property type="entry name" value="EF_TS_2"/>
    <property type="match status" value="1"/>
</dbReference>
<sequence length="216" mass="23528">MSITAAQVNELRKATGAGLMDCKKALTETGGDHEKAIDYLRKKGLAAASKKAGRVASEGAVGSYIHAGGKIGVLVEVNCETDFVARNENFQAFVKDIAMHIAAAAPQYVRREEVTADVVEREKEIYRAKARETGKPENIIEKIIEGQVNKFYADICLLEQQYVKDSDKTVQQFLNETIASIGENISIRRFVRYALGEGLAKKETDFAAEVAAAAGL</sequence>
<protein>
    <recommendedName>
        <fullName evidence="1">Elongation factor Ts</fullName>
        <shortName evidence="1">EF-Ts</shortName>
    </recommendedName>
</protein>
<organism>
    <name type="scientific">Geobacter metallireducens (strain ATCC 53774 / DSM 7210 / GS-15)</name>
    <dbReference type="NCBI Taxonomy" id="269799"/>
    <lineage>
        <taxon>Bacteria</taxon>
        <taxon>Pseudomonadati</taxon>
        <taxon>Thermodesulfobacteriota</taxon>
        <taxon>Desulfuromonadia</taxon>
        <taxon>Geobacterales</taxon>
        <taxon>Geobacteraceae</taxon>
        <taxon>Geobacter</taxon>
    </lineage>
</organism>
<keyword id="KW-0963">Cytoplasm</keyword>
<keyword id="KW-0251">Elongation factor</keyword>
<keyword id="KW-0648">Protein biosynthesis</keyword>
<keyword id="KW-1185">Reference proteome</keyword>
<accession>Q39W87</accession>
<evidence type="ECO:0000255" key="1">
    <source>
        <dbReference type="HAMAP-Rule" id="MF_00050"/>
    </source>
</evidence>
<comment type="function">
    <text evidence="1">Associates with the EF-Tu.GDP complex and induces the exchange of GDP to GTP. It remains bound to the aminoacyl-tRNA.EF-Tu.GTP complex up to the GTP hydrolysis stage on the ribosome.</text>
</comment>
<comment type="subcellular location">
    <subcellularLocation>
        <location evidence="1">Cytoplasm</location>
    </subcellularLocation>
</comment>
<comment type="similarity">
    <text evidence="1">Belongs to the EF-Ts family.</text>
</comment>
<name>EFTS_GEOMG</name>
<proteinExistence type="inferred from homology"/>
<gene>
    <name evidence="1" type="primary">tsf</name>
    <name type="ordered locus">Gmet_1251</name>
</gene>
<reference key="1">
    <citation type="journal article" date="2009" name="BMC Microbiol.">
        <title>The genome sequence of Geobacter metallireducens: features of metabolism, physiology and regulation common and dissimilar to Geobacter sulfurreducens.</title>
        <authorList>
            <person name="Aklujkar M."/>
            <person name="Krushkal J."/>
            <person name="DiBartolo G."/>
            <person name="Lapidus A."/>
            <person name="Land M.L."/>
            <person name="Lovley D.R."/>
        </authorList>
    </citation>
    <scope>NUCLEOTIDE SEQUENCE [LARGE SCALE GENOMIC DNA]</scope>
    <source>
        <strain>ATCC 53774 / DSM 7210 / GS-15</strain>
    </source>
</reference>